<sequence length="367" mass="40748">MKFIIEREQLLKPLQQVSGPLGGRPTLPILGNLLLKVTENTLSLTGTDLEMEMMARVSLSQSHEIGATTVPARKFFDIWRGLPEGAEISVELDGDRLLVRSGRSRFSLSTLPASDFPNLDDWQSEVEFTLPQATLKRLIESTQFSMAHQDVRYYLNGMLFETENTELRTVATDGHRLAVCAMDIGQSLPGHSVIVPRKGVIELMRLLDGSGESLLQLQIGSNNLRAHVGDFIFTSKLVDGRFPDYRRVLPKNPTKTVIAGCDILKQAFSRAAILSNEKFRGVRINLTNGQLKITANNPEQEEAEEIVDVQYQGEEMEIGFNVSYLLDVLNTLKCEEVKLLLTDAVSSVQVENVASAAAAYVVMPMRL</sequence>
<comment type="function">
    <text evidence="1">Confers DNA tethering and processivity to DNA polymerases and other proteins. Acts as a clamp, forming a ring around DNA (a reaction catalyzed by the clamp-loading complex) which diffuses in an ATP-independent manner freely and bidirectionally along dsDNA. Initially characterized for its ability to contact the catalytic subunit of DNA polymerase III (Pol III), a complex, multichain enzyme responsible for most of the replicative synthesis in bacteria; Pol III exhibits 3'-5' exonuclease proofreading activity. The beta chain is required for initiation of replication as well as for processivity of DNA replication.</text>
</comment>
<comment type="subunit">
    <text evidence="1">Forms a ring-shaped head-to-tail homodimer around DNA which binds and tethers DNA polymerases and other proteins to the DNA. The DNA replisome complex has a single clamp-loading complex (3 tau and 1 each of delta, delta', psi and chi subunits) which binds 3 Pol III cores (1 core on the leading strand and 2 on the lagging strand) each with a beta sliding clamp dimer. Additional proteins in the replisome are other copies of gamma, psi and chi, Ssb, DNA helicase and RNA primase.</text>
</comment>
<comment type="subcellular location">
    <subcellularLocation>
        <location evidence="1">Cytoplasm</location>
    </subcellularLocation>
</comment>
<comment type="similarity">
    <text evidence="2">Belongs to the beta sliding clamp family.</text>
</comment>
<keyword id="KW-0963">Cytoplasm</keyword>
<keyword id="KW-0235">DNA replication</keyword>
<keyword id="KW-0238">DNA-binding</keyword>
<keyword id="KW-0239">DNA-directed DNA polymerase</keyword>
<keyword id="KW-0548">Nucleotidyltransferase</keyword>
<keyword id="KW-0808">Transferase</keyword>
<proteinExistence type="inferred from homology"/>
<feature type="chain" id="PRO_0000105452" description="Beta sliding clamp">
    <location>
        <begin position="1"/>
        <end position="367"/>
    </location>
</feature>
<accession>P22838</accession>
<protein>
    <recommendedName>
        <fullName>Beta sliding clamp</fullName>
        <shortName>Beta clamp</shortName>
        <shortName>Sliding clamp</shortName>
    </recommendedName>
    <alternativeName>
        <fullName>Beta-clamp processivity factor</fullName>
    </alternativeName>
    <alternativeName>
        <fullName>DNA polymerase III beta sliding clamp subunit</fullName>
    </alternativeName>
    <alternativeName>
        <fullName>DNA polymerase III subunit beta</fullName>
    </alternativeName>
</protein>
<organism>
    <name type="scientific">Proteus mirabilis</name>
    <dbReference type="NCBI Taxonomy" id="584"/>
    <lineage>
        <taxon>Bacteria</taxon>
        <taxon>Pseudomonadati</taxon>
        <taxon>Pseudomonadota</taxon>
        <taxon>Gammaproteobacteria</taxon>
        <taxon>Enterobacterales</taxon>
        <taxon>Morganellaceae</taxon>
        <taxon>Proteus</taxon>
    </lineage>
</organism>
<gene>
    <name type="primary">dnaN</name>
</gene>
<evidence type="ECO:0000250" key="1">
    <source>
        <dbReference type="UniProtKB" id="P0A988"/>
    </source>
</evidence>
<evidence type="ECO:0000305" key="2"/>
<reference key="1">
    <citation type="journal article" date="1990" name="Gene">
        <title>Nucleotide sequence of a Proteus mirabilis DNA fragment homologous to the 60K-rnpA-rpmH-dnaA-dnaN-recF-gyrB region of Escherichia coli.</title>
        <authorList>
            <person name="Skovgaard O."/>
        </authorList>
    </citation>
    <scope>NUCLEOTIDE SEQUENCE [GENOMIC DNA]</scope>
    <source>
        <strain>LM1509</strain>
    </source>
</reference>
<name>DPO3B_PROMI</name>
<dbReference type="EMBL" id="M58352">
    <property type="protein sequence ID" value="AAA83959.1"/>
    <property type="molecule type" value="Genomic_DNA"/>
</dbReference>
<dbReference type="PIR" id="JQ0734">
    <property type="entry name" value="JQ0734"/>
</dbReference>
<dbReference type="RefSeq" id="WP_004246506.1">
    <property type="nucleotide sequence ID" value="NZ_WURR01000008.1"/>
</dbReference>
<dbReference type="SMR" id="P22838"/>
<dbReference type="STRING" id="584.AOUC001_18990"/>
<dbReference type="GeneID" id="6801671"/>
<dbReference type="OMA" id="YLIMPVR"/>
<dbReference type="OrthoDB" id="8421503at2"/>
<dbReference type="GO" id="GO:0005737">
    <property type="term" value="C:cytoplasm"/>
    <property type="evidence" value="ECO:0007669"/>
    <property type="project" value="UniProtKB-SubCell"/>
</dbReference>
<dbReference type="GO" id="GO:0009360">
    <property type="term" value="C:DNA polymerase III complex"/>
    <property type="evidence" value="ECO:0007669"/>
    <property type="project" value="InterPro"/>
</dbReference>
<dbReference type="GO" id="GO:0008408">
    <property type="term" value="F:3'-5' exonuclease activity"/>
    <property type="evidence" value="ECO:0007669"/>
    <property type="project" value="InterPro"/>
</dbReference>
<dbReference type="GO" id="GO:0003677">
    <property type="term" value="F:DNA binding"/>
    <property type="evidence" value="ECO:0007669"/>
    <property type="project" value="UniProtKB-KW"/>
</dbReference>
<dbReference type="GO" id="GO:0003887">
    <property type="term" value="F:DNA-directed DNA polymerase activity"/>
    <property type="evidence" value="ECO:0007669"/>
    <property type="project" value="UniProtKB-KW"/>
</dbReference>
<dbReference type="GO" id="GO:0006271">
    <property type="term" value="P:DNA strand elongation involved in DNA replication"/>
    <property type="evidence" value="ECO:0007669"/>
    <property type="project" value="TreeGrafter"/>
</dbReference>
<dbReference type="CDD" id="cd00140">
    <property type="entry name" value="beta_clamp"/>
    <property type="match status" value="1"/>
</dbReference>
<dbReference type="FunFam" id="3.10.150.10:FF:000001">
    <property type="entry name" value="Beta sliding clamp"/>
    <property type="match status" value="1"/>
</dbReference>
<dbReference type="FunFam" id="3.10.150.10:FF:000002">
    <property type="entry name" value="Beta sliding clamp"/>
    <property type="match status" value="1"/>
</dbReference>
<dbReference type="FunFam" id="3.10.150.10:FF:000003">
    <property type="entry name" value="Beta sliding clamp"/>
    <property type="match status" value="1"/>
</dbReference>
<dbReference type="Gene3D" id="3.10.150.10">
    <property type="entry name" value="DNA Polymerase III, subunit A, domain 2"/>
    <property type="match status" value="3"/>
</dbReference>
<dbReference type="InterPro" id="IPR046938">
    <property type="entry name" value="DNA_clamp_sf"/>
</dbReference>
<dbReference type="InterPro" id="IPR001001">
    <property type="entry name" value="DNA_polIII_beta"/>
</dbReference>
<dbReference type="InterPro" id="IPR022635">
    <property type="entry name" value="DNA_polIII_beta_C"/>
</dbReference>
<dbReference type="InterPro" id="IPR022637">
    <property type="entry name" value="DNA_polIII_beta_cen"/>
</dbReference>
<dbReference type="InterPro" id="IPR022634">
    <property type="entry name" value="DNA_polIII_beta_N"/>
</dbReference>
<dbReference type="NCBIfam" id="TIGR00663">
    <property type="entry name" value="dnan"/>
    <property type="match status" value="1"/>
</dbReference>
<dbReference type="PANTHER" id="PTHR30478:SF0">
    <property type="entry name" value="BETA SLIDING CLAMP"/>
    <property type="match status" value="1"/>
</dbReference>
<dbReference type="PANTHER" id="PTHR30478">
    <property type="entry name" value="DNA POLYMERASE III SUBUNIT BETA"/>
    <property type="match status" value="1"/>
</dbReference>
<dbReference type="Pfam" id="PF00712">
    <property type="entry name" value="DNA_pol3_beta"/>
    <property type="match status" value="1"/>
</dbReference>
<dbReference type="Pfam" id="PF02767">
    <property type="entry name" value="DNA_pol3_beta_2"/>
    <property type="match status" value="1"/>
</dbReference>
<dbReference type="Pfam" id="PF02768">
    <property type="entry name" value="DNA_pol3_beta_3"/>
    <property type="match status" value="1"/>
</dbReference>
<dbReference type="PIRSF" id="PIRSF000804">
    <property type="entry name" value="DNA_pol_III_b"/>
    <property type="match status" value="1"/>
</dbReference>
<dbReference type="SMART" id="SM00480">
    <property type="entry name" value="POL3Bc"/>
    <property type="match status" value="1"/>
</dbReference>
<dbReference type="SUPFAM" id="SSF55979">
    <property type="entry name" value="DNA clamp"/>
    <property type="match status" value="3"/>
</dbReference>